<gene>
    <name evidence="1" type="primary">ligA</name>
    <name type="ordered locus">gbs0868</name>
</gene>
<sequence>MENRMNELVSLLNQYAKEYYTQDNPTVSDSQYDQLYRELVELEEQHPENILPNSPTHRVGGLVLEGFEKYQHEYPLYSLQDAFSKEELIAFDKRVKAEFPTASYMAELKIDGLSVSLTYVNGILQVGATRGDGNIGENITENLKRVHDIPLHLDQSLDITVRGECYLPKESFEAINIEKRANGEQEFANPRNAAAGTLRQLNTGIVAKRKLATFLYQEASPTQKETQDDVLKELESYGFSVNHHRLISSSMEKIWDFIQTIEKDRISLPYDIDGIVIKVNSLAMQEELGFTVKAPRWAIAYKFPAEEKEAEILSVDWTVGRTGVVTPTANLTPVQLAGTTVSRATLHNVDYIAEKDIRIGDTVVVYKAGDIIPAVLNVVMSKRNQQEVMLIPKLCPSCGSELVHFEDEVALRCINPLCPNQIKERLAHFASRDAMNITGFGPSLVEKLFDAHLIADVADIYRLSIEDLLTLDGIKEKSATKIYHAIQSSKENSAEKLLFGLGIRHVGSKASRLLLEEFGNLRQLSQASQESIASIDGLGGVIAKSLHTFFEKEEVDKLLEELTSYNVNFNYLGKRVSTDAQLSGLTVVLTGKLEKMTRNEAKEKLQNLGAKVTGSVSKKTDLIVAGSDAGSKLTKAQDLGITIQDEDWLLNL</sequence>
<protein>
    <recommendedName>
        <fullName evidence="1">DNA ligase</fullName>
        <ecNumber evidence="1">6.5.1.2</ecNumber>
    </recommendedName>
    <alternativeName>
        <fullName evidence="1">Polydeoxyribonucleotide synthase [NAD(+)]</fullName>
    </alternativeName>
</protein>
<name>DNLJ_STRA3</name>
<comment type="function">
    <text evidence="1">DNA ligase that catalyzes the formation of phosphodiester linkages between 5'-phosphoryl and 3'-hydroxyl groups in double-stranded DNA using NAD as a coenzyme and as the energy source for the reaction. It is essential for DNA replication and repair of damaged DNA.</text>
</comment>
<comment type="catalytic activity">
    <reaction evidence="1">
        <text>NAD(+) + (deoxyribonucleotide)n-3'-hydroxyl + 5'-phospho-(deoxyribonucleotide)m = (deoxyribonucleotide)n+m + AMP + beta-nicotinamide D-nucleotide.</text>
        <dbReference type="EC" id="6.5.1.2"/>
    </reaction>
</comment>
<comment type="cofactor">
    <cofactor evidence="1">
        <name>Mg(2+)</name>
        <dbReference type="ChEBI" id="CHEBI:18420"/>
    </cofactor>
    <cofactor evidence="1">
        <name>Mn(2+)</name>
        <dbReference type="ChEBI" id="CHEBI:29035"/>
    </cofactor>
</comment>
<comment type="similarity">
    <text evidence="1">Belongs to the NAD-dependent DNA ligase family. LigA subfamily.</text>
</comment>
<proteinExistence type="inferred from homology"/>
<dbReference type="EC" id="6.5.1.2" evidence="1"/>
<dbReference type="EMBL" id="AL766847">
    <property type="protein sequence ID" value="CAD46512.1"/>
    <property type="molecule type" value="Genomic_DNA"/>
</dbReference>
<dbReference type="RefSeq" id="WP_001873803.1">
    <property type="nucleotide sequence ID" value="NC_004368.1"/>
</dbReference>
<dbReference type="SMR" id="Q8E5W1"/>
<dbReference type="GeneID" id="66885800"/>
<dbReference type="KEGG" id="san:gbs0868"/>
<dbReference type="eggNOG" id="COG0272">
    <property type="taxonomic scope" value="Bacteria"/>
</dbReference>
<dbReference type="HOGENOM" id="CLU_007764_2_1_9"/>
<dbReference type="Proteomes" id="UP000000823">
    <property type="component" value="Chromosome"/>
</dbReference>
<dbReference type="GO" id="GO:0005829">
    <property type="term" value="C:cytosol"/>
    <property type="evidence" value="ECO:0007669"/>
    <property type="project" value="TreeGrafter"/>
</dbReference>
<dbReference type="GO" id="GO:0003677">
    <property type="term" value="F:DNA binding"/>
    <property type="evidence" value="ECO:0007669"/>
    <property type="project" value="InterPro"/>
</dbReference>
<dbReference type="GO" id="GO:0003911">
    <property type="term" value="F:DNA ligase (NAD+) activity"/>
    <property type="evidence" value="ECO:0007669"/>
    <property type="project" value="UniProtKB-UniRule"/>
</dbReference>
<dbReference type="GO" id="GO:0046872">
    <property type="term" value="F:metal ion binding"/>
    <property type="evidence" value="ECO:0007669"/>
    <property type="project" value="UniProtKB-KW"/>
</dbReference>
<dbReference type="GO" id="GO:0006281">
    <property type="term" value="P:DNA repair"/>
    <property type="evidence" value="ECO:0007669"/>
    <property type="project" value="UniProtKB-KW"/>
</dbReference>
<dbReference type="GO" id="GO:0006260">
    <property type="term" value="P:DNA replication"/>
    <property type="evidence" value="ECO:0007669"/>
    <property type="project" value="UniProtKB-KW"/>
</dbReference>
<dbReference type="CDD" id="cd17748">
    <property type="entry name" value="BRCT_DNA_ligase_like"/>
    <property type="match status" value="1"/>
</dbReference>
<dbReference type="CDD" id="cd00114">
    <property type="entry name" value="LIGANc"/>
    <property type="match status" value="1"/>
</dbReference>
<dbReference type="FunFam" id="1.10.150.20:FF:000006">
    <property type="entry name" value="DNA ligase"/>
    <property type="match status" value="1"/>
</dbReference>
<dbReference type="FunFam" id="1.10.150.20:FF:000007">
    <property type="entry name" value="DNA ligase"/>
    <property type="match status" value="1"/>
</dbReference>
<dbReference type="FunFam" id="2.40.50.140:FF:000012">
    <property type="entry name" value="DNA ligase"/>
    <property type="match status" value="1"/>
</dbReference>
<dbReference type="FunFam" id="3.30.470.30:FF:000001">
    <property type="entry name" value="DNA ligase"/>
    <property type="match status" value="1"/>
</dbReference>
<dbReference type="Gene3D" id="6.20.10.30">
    <property type="match status" value="1"/>
</dbReference>
<dbReference type="Gene3D" id="1.10.150.20">
    <property type="entry name" value="5' to 3' exonuclease, C-terminal subdomain"/>
    <property type="match status" value="2"/>
</dbReference>
<dbReference type="Gene3D" id="3.40.50.10190">
    <property type="entry name" value="BRCT domain"/>
    <property type="match status" value="1"/>
</dbReference>
<dbReference type="Gene3D" id="3.30.470.30">
    <property type="entry name" value="DNA ligase/mRNA capping enzyme"/>
    <property type="match status" value="1"/>
</dbReference>
<dbReference type="Gene3D" id="1.10.287.610">
    <property type="entry name" value="Helix hairpin bin"/>
    <property type="match status" value="1"/>
</dbReference>
<dbReference type="Gene3D" id="2.40.50.140">
    <property type="entry name" value="Nucleic acid-binding proteins"/>
    <property type="match status" value="1"/>
</dbReference>
<dbReference type="HAMAP" id="MF_01588">
    <property type="entry name" value="DNA_ligase_A"/>
    <property type="match status" value="1"/>
</dbReference>
<dbReference type="InterPro" id="IPR001357">
    <property type="entry name" value="BRCT_dom"/>
</dbReference>
<dbReference type="InterPro" id="IPR036420">
    <property type="entry name" value="BRCT_dom_sf"/>
</dbReference>
<dbReference type="InterPro" id="IPR041663">
    <property type="entry name" value="DisA/LigA_HHH"/>
</dbReference>
<dbReference type="InterPro" id="IPR001679">
    <property type="entry name" value="DNA_ligase"/>
</dbReference>
<dbReference type="InterPro" id="IPR018239">
    <property type="entry name" value="DNA_ligase_AS"/>
</dbReference>
<dbReference type="InterPro" id="IPR033136">
    <property type="entry name" value="DNA_ligase_CS"/>
</dbReference>
<dbReference type="InterPro" id="IPR013839">
    <property type="entry name" value="DNAligase_adenylation"/>
</dbReference>
<dbReference type="InterPro" id="IPR013840">
    <property type="entry name" value="DNAligase_N"/>
</dbReference>
<dbReference type="InterPro" id="IPR003583">
    <property type="entry name" value="Hlx-hairpin-Hlx_DNA-bd_motif"/>
</dbReference>
<dbReference type="InterPro" id="IPR012340">
    <property type="entry name" value="NA-bd_OB-fold"/>
</dbReference>
<dbReference type="InterPro" id="IPR004150">
    <property type="entry name" value="NAD_DNA_ligase_OB"/>
</dbReference>
<dbReference type="InterPro" id="IPR010994">
    <property type="entry name" value="RuvA_2-like"/>
</dbReference>
<dbReference type="InterPro" id="IPR004149">
    <property type="entry name" value="Znf_DNAligase_C4"/>
</dbReference>
<dbReference type="NCBIfam" id="TIGR00575">
    <property type="entry name" value="dnlj"/>
    <property type="match status" value="1"/>
</dbReference>
<dbReference type="NCBIfam" id="NF005932">
    <property type="entry name" value="PRK07956.1"/>
    <property type="match status" value="1"/>
</dbReference>
<dbReference type="PANTHER" id="PTHR23389">
    <property type="entry name" value="CHROMOSOME TRANSMISSION FIDELITY FACTOR 18"/>
    <property type="match status" value="1"/>
</dbReference>
<dbReference type="PANTHER" id="PTHR23389:SF9">
    <property type="entry name" value="DNA LIGASE"/>
    <property type="match status" value="1"/>
</dbReference>
<dbReference type="Pfam" id="PF00533">
    <property type="entry name" value="BRCT"/>
    <property type="match status" value="1"/>
</dbReference>
<dbReference type="Pfam" id="PF01653">
    <property type="entry name" value="DNA_ligase_aden"/>
    <property type="match status" value="1"/>
</dbReference>
<dbReference type="Pfam" id="PF03120">
    <property type="entry name" value="DNA_ligase_OB"/>
    <property type="match status" value="1"/>
</dbReference>
<dbReference type="Pfam" id="PF03119">
    <property type="entry name" value="DNA_ligase_ZBD"/>
    <property type="match status" value="1"/>
</dbReference>
<dbReference type="Pfam" id="PF12826">
    <property type="entry name" value="HHH_2"/>
    <property type="match status" value="1"/>
</dbReference>
<dbReference type="Pfam" id="PF14520">
    <property type="entry name" value="HHH_5"/>
    <property type="match status" value="1"/>
</dbReference>
<dbReference type="Pfam" id="PF22745">
    <property type="entry name" value="Nlig-Ia"/>
    <property type="match status" value="1"/>
</dbReference>
<dbReference type="PIRSF" id="PIRSF001604">
    <property type="entry name" value="LigA"/>
    <property type="match status" value="1"/>
</dbReference>
<dbReference type="SMART" id="SM00292">
    <property type="entry name" value="BRCT"/>
    <property type="match status" value="1"/>
</dbReference>
<dbReference type="SMART" id="SM00278">
    <property type="entry name" value="HhH1"/>
    <property type="match status" value="3"/>
</dbReference>
<dbReference type="SMART" id="SM00532">
    <property type="entry name" value="LIGANc"/>
    <property type="match status" value="1"/>
</dbReference>
<dbReference type="SUPFAM" id="SSF52113">
    <property type="entry name" value="BRCT domain"/>
    <property type="match status" value="1"/>
</dbReference>
<dbReference type="SUPFAM" id="SSF56091">
    <property type="entry name" value="DNA ligase/mRNA capping enzyme, catalytic domain"/>
    <property type="match status" value="1"/>
</dbReference>
<dbReference type="SUPFAM" id="SSF50249">
    <property type="entry name" value="Nucleic acid-binding proteins"/>
    <property type="match status" value="1"/>
</dbReference>
<dbReference type="SUPFAM" id="SSF47781">
    <property type="entry name" value="RuvA domain 2-like"/>
    <property type="match status" value="1"/>
</dbReference>
<dbReference type="PROSITE" id="PS50172">
    <property type="entry name" value="BRCT"/>
    <property type="match status" value="1"/>
</dbReference>
<dbReference type="PROSITE" id="PS01055">
    <property type="entry name" value="DNA_LIGASE_N1"/>
    <property type="match status" value="1"/>
</dbReference>
<dbReference type="PROSITE" id="PS01056">
    <property type="entry name" value="DNA_LIGASE_N2"/>
    <property type="match status" value="1"/>
</dbReference>
<organism>
    <name type="scientific">Streptococcus agalactiae serotype III (strain NEM316)</name>
    <dbReference type="NCBI Taxonomy" id="211110"/>
    <lineage>
        <taxon>Bacteria</taxon>
        <taxon>Bacillati</taxon>
        <taxon>Bacillota</taxon>
        <taxon>Bacilli</taxon>
        <taxon>Lactobacillales</taxon>
        <taxon>Streptococcaceae</taxon>
        <taxon>Streptococcus</taxon>
    </lineage>
</organism>
<evidence type="ECO:0000255" key="1">
    <source>
        <dbReference type="HAMAP-Rule" id="MF_01588"/>
    </source>
</evidence>
<accession>Q8E5W1</accession>
<reference key="1">
    <citation type="journal article" date="2002" name="Mol. Microbiol.">
        <title>Genome sequence of Streptococcus agalactiae, a pathogen causing invasive neonatal disease.</title>
        <authorList>
            <person name="Glaser P."/>
            <person name="Rusniok C."/>
            <person name="Buchrieser C."/>
            <person name="Chevalier F."/>
            <person name="Frangeul L."/>
            <person name="Msadek T."/>
            <person name="Zouine M."/>
            <person name="Couve E."/>
            <person name="Lalioui L."/>
            <person name="Poyart C."/>
            <person name="Trieu-Cuot P."/>
            <person name="Kunst F."/>
        </authorList>
    </citation>
    <scope>NUCLEOTIDE SEQUENCE [LARGE SCALE GENOMIC DNA]</scope>
    <source>
        <strain>NEM316</strain>
    </source>
</reference>
<feature type="chain" id="PRO_0000313451" description="DNA ligase">
    <location>
        <begin position="1"/>
        <end position="652"/>
    </location>
</feature>
<feature type="domain" description="BRCT" evidence="1">
    <location>
        <begin position="577"/>
        <end position="652"/>
    </location>
</feature>
<feature type="active site" description="N6-AMP-lysine intermediate" evidence="1">
    <location>
        <position position="109"/>
    </location>
</feature>
<feature type="binding site" evidence="1">
    <location>
        <begin position="29"/>
        <end position="33"/>
    </location>
    <ligand>
        <name>NAD(+)</name>
        <dbReference type="ChEBI" id="CHEBI:57540"/>
    </ligand>
</feature>
<feature type="binding site" evidence="1">
    <location>
        <begin position="78"/>
        <end position="79"/>
    </location>
    <ligand>
        <name>NAD(+)</name>
        <dbReference type="ChEBI" id="CHEBI:57540"/>
    </ligand>
</feature>
<feature type="binding site" evidence="1">
    <location>
        <position position="107"/>
    </location>
    <ligand>
        <name>NAD(+)</name>
        <dbReference type="ChEBI" id="CHEBI:57540"/>
    </ligand>
</feature>
<feature type="binding site" evidence="1">
    <location>
        <position position="130"/>
    </location>
    <ligand>
        <name>NAD(+)</name>
        <dbReference type="ChEBI" id="CHEBI:57540"/>
    </ligand>
</feature>
<feature type="binding site" evidence="1">
    <location>
        <position position="164"/>
    </location>
    <ligand>
        <name>NAD(+)</name>
        <dbReference type="ChEBI" id="CHEBI:57540"/>
    </ligand>
</feature>
<feature type="binding site" evidence="1">
    <location>
        <position position="278"/>
    </location>
    <ligand>
        <name>NAD(+)</name>
        <dbReference type="ChEBI" id="CHEBI:57540"/>
    </ligand>
</feature>
<feature type="binding site" evidence="1">
    <location>
        <position position="302"/>
    </location>
    <ligand>
        <name>NAD(+)</name>
        <dbReference type="ChEBI" id="CHEBI:57540"/>
    </ligand>
</feature>
<feature type="binding site" evidence="1">
    <location>
        <position position="395"/>
    </location>
    <ligand>
        <name>Zn(2+)</name>
        <dbReference type="ChEBI" id="CHEBI:29105"/>
    </ligand>
</feature>
<feature type="binding site" evidence="1">
    <location>
        <position position="398"/>
    </location>
    <ligand>
        <name>Zn(2+)</name>
        <dbReference type="ChEBI" id="CHEBI:29105"/>
    </ligand>
</feature>
<feature type="binding site" evidence="1">
    <location>
        <position position="413"/>
    </location>
    <ligand>
        <name>Zn(2+)</name>
        <dbReference type="ChEBI" id="CHEBI:29105"/>
    </ligand>
</feature>
<feature type="binding site" evidence="1">
    <location>
        <position position="418"/>
    </location>
    <ligand>
        <name>Zn(2+)</name>
        <dbReference type="ChEBI" id="CHEBI:29105"/>
    </ligand>
</feature>
<keyword id="KW-0227">DNA damage</keyword>
<keyword id="KW-0234">DNA repair</keyword>
<keyword id="KW-0235">DNA replication</keyword>
<keyword id="KW-0436">Ligase</keyword>
<keyword id="KW-0460">Magnesium</keyword>
<keyword id="KW-0464">Manganese</keyword>
<keyword id="KW-0479">Metal-binding</keyword>
<keyword id="KW-0520">NAD</keyword>
<keyword id="KW-0862">Zinc</keyword>